<feature type="signal peptide" evidence="4">
    <location>
        <begin position="1"/>
        <end position="22"/>
    </location>
</feature>
<feature type="propeptide" id="PRO_0000453250" evidence="3">
    <location>
        <begin position="23"/>
        <end position="178"/>
    </location>
</feature>
<feature type="chain" id="PRO_0000411189" description="Inactive metallocarboxypeptidase ecm14">
    <location>
        <begin position="179"/>
        <end position="595"/>
    </location>
</feature>
<feature type="domain" description="Peptidase M14" evidence="5">
    <location>
        <begin position="206"/>
        <end position="527"/>
    </location>
</feature>
<feature type="binding site" evidence="1">
    <location>
        <begin position="270"/>
        <end position="273"/>
    </location>
    <ligand>
        <name>substrate</name>
    </ligand>
</feature>
<feature type="binding site" evidence="5">
    <location>
        <position position="270"/>
    </location>
    <ligand>
        <name>Zn(2+)</name>
        <dbReference type="ChEBI" id="CHEBI:29105"/>
        <note>catalytic</note>
    </ligand>
</feature>
<feature type="binding site" evidence="5">
    <location>
        <position position="273"/>
    </location>
    <ligand>
        <name>Zn(2+)</name>
        <dbReference type="ChEBI" id="CHEBI:29105"/>
        <note>catalytic</note>
    </ligand>
</feature>
<feature type="binding site" evidence="1">
    <location>
        <position position="328"/>
    </location>
    <ligand>
        <name>substrate</name>
    </ligand>
</feature>
<feature type="binding site" evidence="1">
    <location>
        <begin position="345"/>
        <end position="346"/>
    </location>
    <ligand>
        <name>substrate</name>
    </ligand>
</feature>
<feature type="binding site" evidence="5">
    <location>
        <position position="402"/>
    </location>
    <ligand>
        <name>Zn(2+)</name>
        <dbReference type="ChEBI" id="CHEBI:29105"/>
        <note>catalytic</note>
    </ligand>
</feature>
<feature type="binding site" evidence="1">
    <location>
        <begin position="403"/>
        <end position="404"/>
    </location>
    <ligand>
        <name>substrate</name>
    </ligand>
</feature>
<feature type="glycosylation site" description="N-linked (GlcNAc...) asparagine" evidence="4">
    <location>
        <position position="386"/>
    </location>
</feature>
<feature type="disulfide bond" evidence="2">
    <location>
        <begin position="339"/>
        <end position="362"/>
    </location>
</feature>
<gene>
    <name type="primary">ecm14</name>
    <name type="ORF">PMAA_071100</name>
</gene>
<organism>
    <name type="scientific">Talaromyces marneffei (strain ATCC 18224 / CBS 334.59 / QM 7333)</name>
    <name type="common">Penicillium marneffei</name>
    <dbReference type="NCBI Taxonomy" id="441960"/>
    <lineage>
        <taxon>Eukaryota</taxon>
        <taxon>Fungi</taxon>
        <taxon>Dikarya</taxon>
        <taxon>Ascomycota</taxon>
        <taxon>Pezizomycotina</taxon>
        <taxon>Eurotiomycetes</taxon>
        <taxon>Eurotiomycetidae</taxon>
        <taxon>Eurotiales</taxon>
        <taxon>Trichocomaceae</taxon>
        <taxon>Talaromyces</taxon>
        <taxon>Talaromyces sect. Talaromyces</taxon>
    </lineage>
</organism>
<evidence type="ECO:0000250" key="1">
    <source>
        <dbReference type="UniProtKB" id="P00730"/>
    </source>
</evidence>
<evidence type="ECO:0000250" key="2">
    <source>
        <dbReference type="UniProtKB" id="P15085"/>
    </source>
</evidence>
<evidence type="ECO:0000250" key="3">
    <source>
        <dbReference type="UniProtKB" id="P38836"/>
    </source>
</evidence>
<evidence type="ECO:0000255" key="4"/>
<evidence type="ECO:0000255" key="5">
    <source>
        <dbReference type="PROSITE-ProRule" id="PRU01379"/>
    </source>
</evidence>
<evidence type="ECO:0000305" key="6"/>
<proteinExistence type="inferred from homology"/>
<comment type="function">
    <text evidence="3">Inactive carboxypeptidase that may play a role in cell wall organization and biogenesis.</text>
</comment>
<comment type="cofactor">
    <cofactor evidence="1">
        <name>Zn(2+)</name>
        <dbReference type="ChEBI" id="CHEBI:29105"/>
    </cofactor>
    <text evidence="1">Binds 1 zinc ion per subunit.</text>
</comment>
<comment type="subcellular location">
    <subcellularLocation>
        <location evidence="3">Vacuole</location>
    </subcellularLocation>
    <subcellularLocation>
        <location evidence="3">Secreted</location>
    </subcellularLocation>
</comment>
<comment type="similarity">
    <text evidence="6">Belongs to the peptidase M14 family.</text>
</comment>
<comment type="caution">
    <text evidence="3">Lacks the conserved Glu residue in position 493 essential for carbopeptidase activity. The mature form lacks catalytic activity towards synthetic peptide substrates.</text>
</comment>
<accession>B6Q972</accession>
<name>ECM14_TALMQ</name>
<reference key="1">
    <citation type="journal article" date="2015" name="Genome Announc.">
        <title>Genome sequence of the AIDS-associated pathogen Penicillium marneffei (ATCC18224) and its near taxonomic relative Talaromyces stipitatus (ATCC10500).</title>
        <authorList>
            <person name="Nierman W.C."/>
            <person name="Fedorova-Abrams N.D."/>
            <person name="Andrianopoulos A."/>
        </authorList>
    </citation>
    <scope>NUCLEOTIDE SEQUENCE [LARGE SCALE GENOMIC DNA]</scope>
    <source>
        <strain>ATCC 18224 / CBS 334.59 / QM 7333</strain>
    </source>
</reference>
<dbReference type="EMBL" id="DS995900">
    <property type="protein sequence ID" value="EEA26026.1"/>
    <property type="molecule type" value="Genomic_DNA"/>
</dbReference>
<dbReference type="RefSeq" id="XP_002146573.1">
    <property type="nucleotide sequence ID" value="XM_002146537.1"/>
</dbReference>
<dbReference type="SMR" id="B6Q972"/>
<dbReference type="STRING" id="441960.B6Q972"/>
<dbReference type="GlyCosmos" id="B6Q972">
    <property type="glycosylation" value="1 site, No reported glycans"/>
</dbReference>
<dbReference type="VEuPathDB" id="FungiDB:PMAA_071100"/>
<dbReference type="HOGENOM" id="CLU_019326_1_0_1"/>
<dbReference type="OrthoDB" id="11891at28568"/>
<dbReference type="PhylomeDB" id="B6Q972"/>
<dbReference type="Proteomes" id="UP000001294">
    <property type="component" value="Unassembled WGS sequence"/>
</dbReference>
<dbReference type="GO" id="GO:0005576">
    <property type="term" value="C:extracellular region"/>
    <property type="evidence" value="ECO:0007669"/>
    <property type="project" value="UniProtKB-SubCell"/>
</dbReference>
<dbReference type="GO" id="GO:0005773">
    <property type="term" value="C:vacuole"/>
    <property type="evidence" value="ECO:0007669"/>
    <property type="project" value="UniProtKB-SubCell"/>
</dbReference>
<dbReference type="GO" id="GO:0008270">
    <property type="term" value="F:zinc ion binding"/>
    <property type="evidence" value="ECO:0007669"/>
    <property type="project" value="InterPro"/>
</dbReference>
<dbReference type="GO" id="GO:0071555">
    <property type="term" value="P:cell wall organization"/>
    <property type="evidence" value="ECO:0007669"/>
    <property type="project" value="UniProtKB-KW"/>
</dbReference>
<dbReference type="GO" id="GO:0006508">
    <property type="term" value="P:proteolysis"/>
    <property type="evidence" value="ECO:0007669"/>
    <property type="project" value="InterPro"/>
</dbReference>
<dbReference type="CDD" id="cd03860">
    <property type="entry name" value="M14_CP_A-B_like"/>
    <property type="match status" value="1"/>
</dbReference>
<dbReference type="FunFam" id="3.40.630.10:FF:000060">
    <property type="entry name" value="Putative metallocarboxypeptidase ecm14"/>
    <property type="match status" value="1"/>
</dbReference>
<dbReference type="Gene3D" id="3.30.70.340">
    <property type="entry name" value="Metallocarboxypeptidase-like"/>
    <property type="match status" value="1"/>
</dbReference>
<dbReference type="Gene3D" id="3.40.630.10">
    <property type="entry name" value="Zn peptidases"/>
    <property type="match status" value="1"/>
</dbReference>
<dbReference type="InterPro" id="IPR036990">
    <property type="entry name" value="M14A-like_propep"/>
</dbReference>
<dbReference type="InterPro" id="IPR000834">
    <property type="entry name" value="Peptidase_M14"/>
</dbReference>
<dbReference type="PANTHER" id="PTHR11705:SF147">
    <property type="entry name" value="INACTIVE METALLOCARBOXYPEPTIDASE ECM14"/>
    <property type="match status" value="1"/>
</dbReference>
<dbReference type="PANTHER" id="PTHR11705">
    <property type="entry name" value="PROTEASE FAMILY M14 CARBOXYPEPTIDASE A,B"/>
    <property type="match status" value="1"/>
</dbReference>
<dbReference type="Pfam" id="PF00246">
    <property type="entry name" value="Peptidase_M14"/>
    <property type="match status" value="1"/>
</dbReference>
<dbReference type="PRINTS" id="PR00765">
    <property type="entry name" value="CRBOXYPTASEA"/>
</dbReference>
<dbReference type="SMART" id="SM00631">
    <property type="entry name" value="Zn_pept"/>
    <property type="match status" value="1"/>
</dbReference>
<dbReference type="SUPFAM" id="SSF54897">
    <property type="entry name" value="Protease propeptides/inhibitors"/>
    <property type="match status" value="1"/>
</dbReference>
<dbReference type="SUPFAM" id="SSF53187">
    <property type="entry name" value="Zn-dependent exopeptidases"/>
    <property type="match status" value="1"/>
</dbReference>
<dbReference type="PROSITE" id="PS00132">
    <property type="entry name" value="CARBOXYPEPT_ZN_1"/>
    <property type="match status" value="1"/>
</dbReference>
<dbReference type="PROSITE" id="PS52035">
    <property type="entry name" value="PEPTIDASE_M14"/>
    <property type="match status" value="1"/>
</dbReference>
<sequence>MYRPDHVFVILCAVFFTGQVTAVPAGTGITHPHSPQLGPFEPVGFASQTQTQLAPSRGPFTWLRDSVIERIWGIDKEKQSLSKPGPRPVPEKSWSRYGSDIVLRIEVHNAEEVEALAEAVNILFLDVWDSNENYVDIRLAKEVVPSLLGLLPQSLQKTHTLLIEDLSKMIYESQYPSRGFKHHKNDQTTRHTGFQSSDVGDLFFDNYQPFPVILQWMRLLVSMFPSHVQLINVGVTHEGRDIPAFRLGARPSGDQNEEPRKTVMIVGGSHAREWISTSTVAYIAFQLITEFGNSPPITKLLEDFDWILVPTINPDGYVYSWDMDRLWRKNRQQTGLPFCPGIDLDRSWGYEWDGQGTRANPCSESYAGNNAFDSMETRTIAEWAYNQTQNKQSDFVGFLDLHSYSQQILYPYSYSCSTVPPTLENLEELAFGIAKAIRMTNQETYVVKSACEGVVTTEKGTGQRVSTNVESTGGSALDWFYHQLHAKYSYQIKLRDKGMYGFLLPPENIVPTGREIFNSVLVLGHFLLGEGANGLEWSFLSGSGSAAGKEDDSSRTFDRLFFDNNEEQLEKSADDRDYFSVVEEDVYQDEGWGLW</sequence>
<keyword id="KW-0961">Cell wall biogenesis/degradation</keyword>
<keyword id="KW-1015">Disulfide bond</keyword>
<keyword id="KW-0325">Glycoprotein</keyword>
<keyword id="KW-0479">Metal-binding</keyword>
<keyword id="KW-1185">Reference proteome</keyword>
<keyword id="KW-0964">Secreted</keyword>
<keyword id="KW-0732">Signal</keyword>
<keyword id="KW-0926">Vacuole</keyword>
<keyword id="KW-0862">Zinc</keyword>
<protein>
    <recommendedName>
        <fullName evidence="6">Inactive metallocarboxypeptidase ecm14</fullName>
    </recommendedName>
</protein>